<name>RL24_ERYLH</name>
<sequence>MASAKIKKGDSVVVLSGKDKGKTGTVAKVMPKEGKVVVEGVNMIARHRKPSQENPQGGIDRYEAPMHIAKVAVADPKDGKPTRVRIEEKDGKKVRVAVKSGETIDG</sequence>
<evidence type="ECO:0000255" key="1">
    <source>
        <dbReference type="HAMAP-Rule" id="MF_01326"/>
    </source>
</evidence>
<evidence type="ECO:0000305" key="2"/>
<accession>Q2N9C2</accession>
<reference key="1">
    <citation type="journal article" date="2009" name="J. Bacteriol.">
        <title>Complete genome sequence of Erythrobacter litoralis HTCC2594.</title>
        <authorList>
            <person name="Oh H.M."/>
            <person name="Giovannoni S.J."/>
            <person name="Ferriera S."/>
            <person name="Johnson J."/>
            <person name="Cho J.C."/>
        </authorList>
    </citation>
    <scope>NUCLEOTIDE SEQUENCE [LARGE SCALE GENOMIC DNA]</scope>
    <source>
        <strain>HTCC2594</strain>
    </source>
</reference>
<proteinExistence type="inferred from homology"/>
<organism>
    <name type="scientific">Erythrobacter litoralis (strain HTCC2594)</name>
    <dbReference type="NCBI Taxonomy" id="314225"/>
    <lineage>
        <taxon>Bacteria</taxon>
        <taxon>Pseudomonadati</taxon>
        <taxon>Pseudomonadota</taxon>
        <taxon>Alphaproteobacteria</taxon>
        <taxon>Sphingomonadales</taxon>
        <taxon>Erythrobacteraceae</taxon>
        <taxon>Erythrobacter/Porphyrobacter group</taxon>
        <taxon>Erythrobacter</taxon>
    </lineage>
</organism>
<protein>
    <recommendedName>
        <fullName evidence="1">Large ribosomal subunit protein uL24</fullName>
    </recommendedName>
    <alternativeName>
        <fullName evidence="2">50S ribosomal protein L24</fullName>
    </alternativeName>
</protein>
<comment type="function">
    <text evidence="1">One of two assembly initiator proteins, it binds directly to the 5'-end of the 23S rRNA, where it nucleates assembly of the 50S subunit.</text>
</comment>
<comment type="function">
    <text evidence="1">One of the proteins that surrounds the polypeptide exit tunnel on the outside of the subunit.</text>
</comment>
<comment type="subunit">
    <text evidence="1">Part of the 50S ribosomal subunit.</text>
</comment>
<comment type="similarity">
    <text evidence="1">Belongs to the universal ribosomal protein uL24 family.</text>
</comment>
<dbReference type="EMBL" id="CP000157">
    <property type="protein sequence ID" value="ABC63719.1"/>
    <property type="molecule type" value="Genomic_DNA"/>
</dbReference>
<dbReference type="RefSeq" id="WP_011414551.1">
    <property type="nucleotide sequence ID" value="NC_007722.1"/>
</dbReference>
<dbReference type="SMR" id="Q2N9C2"/>
<dbReference type="STRING" id="314225.ELI_08135"/>
<dbReference type="KEGG" id="eli:ELI_08135"/>
<dbReference type="eggNOG" id="COG0198">
    <property type="taxonomic scope" value="Bacteria"/>
</dbReference>
<dbReference type="HOGENOM" id="CLU_093315_2_0_5"/>
<dbReference type="OrthoDB" id="9807419at2"/>
<dbReference type="Proteomes" id="UP000008808">
    <property type="component" value="Chromosome"/>
</dbReference>
<dbReference type="GO" id="GO:1990904">
    <property type="term" value="C:ribonucleoprotein complex"/>
    <property type="evidence" value="ECO:0007669"/>
    <property type="project" value="UniProtKB-KW"/>
</dbReference>
<dbReference type="GO" id="GO:0005840">
    <property type="term" value="C:ribosome"/>
    <property type="evidence" value="ECO:0007669"/>
    <property type="project" value="UniProtKB-KW"/>
</dbReference>
<dbReference type="GO" id="GO:0019843">
    <property type="term" value="F:rRNA binding"/>
    <property type="evidence" value="ECO:0007669"/>
    <property type="project" value="UniProtKB-UniRule"/>
</dbReference>
<dbReference type="GO" id="GO:0003735">
    <property type="term" value="F:structural constituent of ribosome"/>
    <property type="evidence" value="ECO:0007669"/>
    <property type="project" value="InterPro"/>
</dbReference>
<dbReference type="GO" id="GO:0006412">
    <property type="term" value="P:translation"/>
    <property type="evidence" value="ECO:0007669"/>
    <property type="project" value="UniProtKB-UniRule"/>
</dbReference>
<dbReference type="CDD" id="cd06089">
    <property type="entry name" value="KOW_RPL26"/>
    <property type="match status" value="1"/>
</dbReference>
<dbReference type="FunFam" id="2.30.30.30:FF:000004">
    <property type="entry name" value="50S ribosomal protein L24"/>
    <property type="match status" value="1"/>
</dbReference>
<dbReference type="Gene3D" id="2.30.30.30">
    <property type="match status" value="1"/>
</dbReference>
<dbReference type="HAMAP" id="MF_01326_B">
    <property type="entry name" value="Ribosomal_uL24_B"/>
    <property type="match status" value="1"/>
</dbReference>
<dbReference type="InterPro" id="IPR005824">
    <property type="entry name" value="KOW"/>
</dbReference>
<dbReference type="InterPro" id="IPR014722">
    <property type="entry name" value="Rib_uL2_dom2"/>
</dbReference>
<dbReference type="InterPro" id="IPR003256">
    <property type="entry name" value="Ribosomal_uL24"/>
</dbReference>
<dbReference type="InterPro" id="IPR005825">
    <property type="entry name" value="Ribosomal_uL24_CS"/>
</dbReference>
<dbReference type="InterPro" id="IPR041988">
    <property type="entry name" value="Ribosomal_uL24_KOW"/>
</dbReference>
<dbReference type="InterPro" id="IPR008991">
    <property type="entry name" value="Translation_prot_SH3-like_sf"/>
</dbReference>
<dbReference type="NCBIfam" id="TIGR01079">
    <property type="entry name" value="rplX_bact"/>
    <property type="match status" value="1"/>
</dbReference>
<dbReference type="PANTHER" id="PTHR12903">
    <property type="entry name" value="MITOCHONDRIAL RIBOSOMAL PROTEIN L24"/>
    <property type="match status" value="1"/>
</dbReference>
<dbReference type="Pfam" id="PF00467">
    <property type="entry name" value="KOW"/>
    <property type="match status" value="1"/>
</dbReference>
<dbReference type="Pfam" id="PF17136">
    <property type="entry name" value="ribosomal_L24"/>
    <property type="match status" value="1"/>
</dbReference>
<dbReference type="SMART" id="SM00739">
    <property type="entry name" value="KOW"/>
    <property type="match status" value="1"/>
</dbReference>
<dbReference type="SUPFAM" id="SSF50104">
    <property type="entry name" value="Translation proteins SH3-like domain"/>
    <property type="match status" value="1"/>
</dbReference>
<dbReference type="PROSITE" id="PS01108">
    <property type="entry name" value="RIBOSOMAL_L24"/>
    <property type="match status" value="1"/>
</dbReference>
<gene>
    <name evidence="1" type="primary">rplX</name>
    <name type="ordered locus">ELI_08135</name>
</gene>
<feature type="chain" id="PRO_1000052213" description="Large ribosomal subunit protein uL24">
    <location>
        <begin position="1"/>
        <end position="106"/>
    </location>
</feature>
<keyword id="KW-1185">Reference proteome</keyword>
<keyword id="KW-0687">Ribonucleoprotein</keyword>
<keyword id="KW-0689">Ribosomal protein</keyword>
<keyword id="KW-0694">RNA-binding</keyword>
<keyword id="KW-0699">rRNA-binding</keyword>